<gene>
    <name type="primary">DOT1</name>
    <name type="ordered locus">DEHA2D01694g</name>
</gene>
<feature type="chain" id="PRO_0000270611" description="Histone-lysine N-methyltransferase, H3 lysine-79 specific">
    <location>
        <begin position="1"/>
        <end position="1172"/>
    </location>
</feature>
<feature type="domain" description="DOT1" evidence="3">
    <location>
        <begin position="846"/>
        <end position="1172"/>
    </location>
</feature>
<feature type="region of interest" description="Disordered" evidence="4">
    <location>
        <begin position="47"/>
        <end position="68"/>
    </location>
</feature>
<feature type="region of interest" description="Disordered" evidence="4">
    <location>
        <begin position="473"/>
        <end position="497"/>
    </location>
</feature>
<feature type="region of interest" description="Disordered" evidence="4">
    <location>
        <begin position="873"/>
        <end position="911"/>
    </location>
</feature>
<feature type="compositionally biased region" description="Low complexity" evidence="4">
    <location>
        <begin position="55"/>
        <end position="68"/>
    </location>
</feature>
<feature type="compositionally biased region" description="Basic and acidic residues" evidence="4">
    <location>
        <begin position="473"/>
        <end position="487"/>
    </location>
</feature>
<feature type="compositionally biased region" description="Acidic residues" evidence="4">
    <location>
        <begin position="885"/>
        <end position="896"/>
    </location>
</feature>
<feature type="binding site" evidence="3">
    <location>
        <begin position="981"/>
        <end position="984"/>
    </location>
    <ligand>
        <name>S-adenosyl-L-methionine</name>
        <dbReference type="ChEBI" id="CHEBI:59789"/>
    </ligand>
</feature>
<feature type="binding site" evidence="3">
    <location>
        <begin position="1004"/>
        <end position="1013"/>
    </location>
    <ligand>
        <name>S-adenosyl-L-methionine</name>
        <dbReference type="ChEBI" id="CHEBI:59789"/>
    </ligand>
</feature>
<feature type="binding site" evidence="3">
    <location>
        <position position="1031"/>
    </location>
    <ligand>
        <name>S-adenosyl-L-methionine</name>
        <dbReference type="ChEBI" id="CHEBI:59789"/>
    </ligand>
</feature>
<feature type="binding site" evidence="3">
    <location>
        <begin position="1068"/>
        <end position="1069"/>
    </location>
    <ligand>
        <name>S-adenosyl-L-methionine</name>
        <dbReference type="ChEBI" id="CHEBI:59789"/>
    </ligand>
</feature>
<evidence type="ECO:0000250" key="1"/>
<evidence type="ECO:0000250" key="2">
    <source>
        <dbReference type="UniProtKB" id="Q04089"/>
    </source>
</evidence>
<evidence type="ECO:0000255" key="3">
    <source>
        <dbReference type="PROSITE-ProRule" id="PRU00902"/>
    </source>
</evidence>
<evidence type="ECO:0000256" key="4">
    <source>
        <dbReference type="SAM" id="MobiDB-lite"/>
    </source>
</evidence>
<accession>Q6BTC8</accession>
<protein>
    <recommendedName>
        <fullName>Histone-lysine N-methyltransferase, H3 lysine-79 specific</fullName>
        <ecNumber>2.1.1.360</ecNumber>
    </recommendedName>
    <alternativeName>
        <fullName>Histone H3-K79 methyltransferase</fullName>
        <shortName>H3-K79-HMTase</shortName>
    </alternativeName>
</protein>
<reference key="1">
    <citation type="journal article" date="2004" name="Nature">
        <title>Genome evolution in yeasts.</title>
        <authorList>
            <person name="Dujon B."/>
            <person name="Sherman D."/>
            <person name="Fischer G."/>
            <person name="Durrens P."/>
            <person name="Casaregola S."/>
            <person name="Lafontaine I."/>
            <person name="de Montigny J."/>
            <person name="Marck C."/>
            <person name="Neuveglise C."/>
            <person name="Talla E."/>
            <person name="Goffard N."/>
            <person name="Frangeul L."/>
            <person name="Aigle M."/>
            <person name="Anthouard V."/>
            <person name="Babour A."/>
            <person name="Barbe V."/>
            <person name="Barnay S."/>
            <person name="Blanchin S."/>
            <person name="Beckerich J.-M."/>
            <person name="Beyne E."/>
            <person name="Bleykasten C."/>
            <person name="Boisrame A."/>
            <person name="Boyer J."/>
            <person name="Cattolico L."/>
            <person name="Confanioleri F."/>
            <person name="de Daruvar A."/>
            <person name="Despons L."/>
            <person name="Fabre E."/>
            <person name="Fairhead C."/>
            <person name="Ferry-Dumazet H."/>
            <person name="Groppi A."/>
            <person name="Hantraye F."/>
            <person name="Hennequin C."/>
            <person name="Jauniaux N."/>
            <person name="Joyet P."/>
            <person name="Kachouri R."/>
            <person name="Kerrest A."/>
            <person name="Koszul R."/>
            <person name="Lemaire M."/>
            <person name="Lesur I."/>
            <person name="Ma L."/>
            <person name="Muller H."/>
            <person name="Nicaud J.-M."/>
            <person name="Nikolski M."/>
            <person name="Oztas S."/>
            <person name="Ozier-Kalogeropoulos O."/>
            <person name="Pellenz S."/>
            <person name="Potier S."/>
            <person name="Richard G.-F."/>
            <person name="Straub M.-L."/>
            <person name="Suleau A."/>
            <person name="Swennen D."/>
            <person name="Tekaia F."/>
            <person name="Wesolowski-Louvel M."/>
            <person name="Westhof E."/>
            <person name="Wirth B."/>
            <person name="Zeniou-Meyer M."/>
            <person name="Zivanovic Y."/>
            <person name="Bolotin-Fukuhara M."/>
            <person name="Thierry A."/>
            <person name="Bouchier C."/>
            <person name="Caudron B."/>
            <person name="Scarpelli C."/>
            <person name="Gaillardin C."/>
            <person name="Weissenbach J."/>
            <person name="Wincker P."/>
            <person name="Souciet J.-L."/>
        </authorList>
    </citation>
    <scope>NUCLEOTIDE SEQUENCE [LARGE SCALE GENOMIC DNA]</scope>
    <source>
        <strain>ATCC 36239 / CBS 767 / BCRC 21394 / JCM 1990 / NBRC 0083 / IGC 2968</strain>
    </source>
</reference>
<dbReference type="EC" id="2.1.1.360"/>
<dbReference type="EMBL" id="CR382136">
    <property type="protein sequence ID" value="CAG86674.2"/>
    <property type="molecule type" value="Genomic_DNA"/>
</dbReference>
<dbReference type="RefSeq" id="XP_458542.2">
    <property type="nucleotide sequence ID" value="XM_458542.1"/>
</dbReference>
<dbReference type="SMR" id="Q6BTC8"/>
<dbReference type="STRING" id="284592.Q6BTC8"/>
<dbReference type="GeneID" id="2901204"/>
<dbReference type="KEGG" id="dha:DEHA2D01694g"/>
<dbReference type="VEuPathDB" id="FungiDB:DEHA2D01694g"/>
<dbReference type="eggNOG" id="KOG3924">
    <property type="taxonomic scope" value="Eukaryota"/>
</dbReference>
<dbReference type="HOGENOM" id="CLU_004528_0_0_1"/>
<dbReference type="InParanoid" id="Q6BTC8"/>
<dbReference type="OMA" id="NICEEYV"/>
<dbReference type="OrthoDB" id="443402at2759"/>
<dbReference type="Proteomes" id="UP000000599">
    <property type="component" value="Chromosome D"/>
</dbReference>
<dbReference type="GO" id="GO:0005634">
    <property type="term" value="C:nucleus"/>
    <property type="evidence" value="ECO:0007669"/>
    <property type="project" value="UniProtKB-SubCell"/>
</dbReference>
<dbReference type="GO" id="GO:0140956">
    <property type="term" value="F:histone H3K79 trimethyltransferase activity"/>
    <property type="evidence" value="ECO:0007669"/>
    <property type="project" value="UniProtKB-EC"/>
</dbReference>
<dbReference type="GO" id="GO:0000077">
    <property type="term" value="P:DNA damage checkpoint signaling"/>
    <property type="evidence" value="ECO:0007669"/>
    <property type="project" value="TreeGrafter"/>
</dbReference>
<dbReference type="GO" id="GO:0006281">
    <property type="term" value="P:DNA repair"/>
    <property type="evidence" value="ECO:0007669"/>
    <property type="project" value="TreeGrafter"/>
</dbReference>
<dbReference type="GO" id="GO:0032259">
    <property type="term" value="P:methylation"/>
    <property type="evidence" value="ECO:0007669"/>
    <property type="project" value="UniProtKB-KW"/>
</dbReference>
<dbReference type="Gene3D" id="1.10.260.170">
    <property type="match status" value="1"/>
</dbReference>
<dbReference type="Gene3D" id="3.40.50.150">
    <property type="entry name" value="Vaccinia Virus protein VP39"/>
    <property type="match status" value="1"/>
</dbReference>
<dbReference type="InterPro" id="IPR025789">
    <property type="entry name" value="DOT1_dom"/>
</dbReference>
<dbReference type="InterPro" id="IPR030445">
    <property type="entry name" value="H3-K79_meTrfase"/>
</dbReference>
<dbReference type="InterPro" id="IPR029063">
    <property type="entry name" value="SAM-dependent_MTases_sf"/>
</dbReference>
<dbReference type="PANTHER" id="PTHR21451">
    <property type="entry name" value="HISTONE H3 METHYLTRANSFERASE"/>
    <property type="match status" value="1"/>
</dbReference>
<dbReference type="PANTHER" id="PTHR21451:SF0">
    <property type="entry name" value="HISTONE-LYSINE N-METHYLTRANSFERASE, H3 LYSINE-79 SPECIFIC"/>
    <property type="match status" value="1"/>
</dbReference>
<dbReference type="Pfam" id="PF08123">
    <property type="entry name" value="DOT1"/>
    <property type="match status" value="1"/>
</dbReference>
<dbReference type="SUPFAM" id="SSF53335">
    <property type="entry name" value="S-adenosyl-L-methionine-dependent methyltransferases"/>
    <property type="match status" value="1"/>
</dbReference>
<dbReference type="PROSITE" id="PS51569">
    <property type="entry name" value="DOT1"/>
    <property type="match status" value="1"/>
</dbReference>
<comment type="function">
    <text evidence="2">Histone methyltransferase that specifically trimethylates histone H3 to form H3K79me3. This methylation is required for telomere silencing and for the pachytene checkpoint during the meiotic cell cycle by allowing the recruitment of RAD9 to double strand breaks. Nucleosomes are preferred as substrate compared to free histone.</text>
</comment>
<comment type="catalytic activity">
    <reaction evidence="2 3">
        <text>L-lysyl(79)-[histone H3] + 3 S-adenosyl-L-methionine = N(6),N(6),N(6)-trimethyl-L-lysyl(79)-[histone H3] + 3 S-adenosyl-L-homocysteine + 3 H(+)</text>
        <dbReference type="Rhea" id="RHEA:60328"/>
        <dbReference type="Rhea" id="RHEA-COMP:15549"/>
        <dbReference type="Rhea" id="RHEA-COMP:15552"/>
        <dbReference type="ChEBI" id="CHEBI:15378"/>
        <dbReference type="ChEBI" id="CHEBI:29969"/>
        <dbReference type="ChEBI" id="CHEBI:57856"/>
        <dbReference type="ChEBI" id="CHEBI:59789"/>
        <dbReference type="ChEBI" id="CHEBI:61961"/>
        <dbReference type="EC" id="2.1.1.360"/>
    </reaction>
</comment>
<comment type="activity regulation">
    <text evidence="1">Ubiquitination of histone H2B to form H2BK123ub1 is required for efficient DOT1 methyltransferase activity on histone H3.</text>
</comment>
<comment type="subcellular location">
    <subcellularLocation>
        <location evidence="1">Nucleus</location>
    </subcellularLocation>
</comment>
<comment type="miscellaneous">
    <text>In contrast to other lysine histone methyltransferases, it does not contain a SET domain, suggesting the existence of another mechanism for methylation of lysine residues of histones.</text>
</comment>
<comment type="similarity">
    <text evidence="3">Belongs to the class I-like SAM-binding methyltransferase superfamily. DOT1 family.</text>
</comment>
<sequence length="1172" mass="135295">MENIAHHNTTYNITPICSDSSECSSMEMLPLGCKTHSDKSDARRNLMDTGIYTPDSNSDSSDPRSDSSCVDVSNSLAVSHPISFCNWTDEESSLLTEHIKTDLTSEALTSAFPNKSLALIIRKIHDLQPVLDWTKNEIYLLAGIILNDSNSAIRRHKHKFPCRNVSNLNKKFQHYKNMVRRLNGVDHSKWTKPEIASLISLIDYDLTKTKLQKELPNKNIEEIKDLTNEMRIHSNFSHVESVLFEQTMTENDPIEIVLDQFPLKNKETCKKRLLKLNELSQHRDMAKRRLDEFESLIQNELKQIKDSIDLTRLKYLLVNDLTGKQLRSSFPGISMKYLKLIAKEMGFDEAGEYTLAEMNFLKKALQENAKLKSIIDELPFRSQLSIETKINSVEPNRRRSVFTSQVDELLYMAKWYSSDNFGNLSRRRNSRYASKLDKPKDKASDIMQPSKLHLENEEVTEAKVIPHDKGVENMISDHKLKGKNNEQKKRKSKKPTSMVEVLKEESAYFQSVTGNRCVLKEGQKRKRERLMQIKLETKLKKPKSQNLNETNRIQETKKLMKCDVEPDKVKEQKSFKSENLKEAKLDASDSSIVSDVEISLKKKLNKIENEEKRSPYDPEDISTDTLVPLYGRQLYVNEVYETQPRPPKLSFREDTNIMVQNCSEISLTDTIAADIISQHCKNYRDMPISFPSLTIVDRNTNRMILNPMNKIRIRFLLYPQHSELFILAEPKSNELDPINEIKKLFQLHYSLFFSHSSKLKKIILSEYNKEIDISIEENDFVRFMFVIDKWNRLMVELTPNDVDIGSHDINEEIRAYLSPNEIKIPSDEDIRLDIFYSEIQLSTEENPISDNDPIEPSSPSFDLIKSMKRCFTHDSSNRLTPPISSEEDNKENEPPIESDFRNNNNKGSIPCTPVRLNTRNKMVVNAVKPENYESNFFRHLKEKTSVSRFCVQQILLRIYSRIVSTESRKLRSYKAFTAEVYGELLPSFTSEVLTKVNLQPQHKFYDLGSGVGNTTFQAALEFGVHLSGGCEIMEHASKLTELQTMLLNKHLALLGLKKLPLNFALSQSFVENDIVRQAVIECDVLLVNNYLFDVNLNTAVGKMLYGLKPGTKIISLRNFIRPRYKASSDKTIFDYLKVERHEMSNYLSVSWTANKVPYYISTVQENICEEYV</sequence>
<name>DOT1_DEBHA</name>
<organism>
    <name type="scientific">Debaryomyces hansenii (strain ATCC 36239 / CBS 767 / BCRC 21394 / JCM 1990 / NBRC 0083 / IGC 2968)</name>
    <name type="common">Yeast</name>
    <name type="synonym">Torulaspora hansenii</name>
    <dbReference type="NCBI Taxonomy" id="284592"/>
    <lineage>
        <taxon>Eukaryota</taxon>
        <taxon>Fungi</taxon>
        <taxon>Dikarya</taxon>
        <taxon>Ascomycota</taxon>
        <taxon>Saccharomycotina</taxon>
        <taxon>Pichiomycetes</taxon>
        <taxon>Debaryomycetaceae</taxon>
        <taxon>Debaryomyces</taxon>
    </lineage>
</organism>
<keyword id="KW-0156">Chromatin regulator</keyword>
<keyword id="KW-0489">Methyltransferase</keyword>
<keyword id="KW-0539">Nucleus</keyword>
<keyword id="KW-1185">Reference proteome</keyword>
<keyword id="KW-0677">Repeat</keyword>
<keyword id="KW-0949">S-adenosyl-L-methionine</keyword>
<keyword id="KW-0804">Transcription</keyword>
<keyword id="KW-0805">Transcription regulation</keyword>
<keyword id="KW-0808">Transferase</keyword>
<proteinExistence type="inferred from homology"/>